<comment type="function">
    <text evidence="3">Catalyzes the hydrolysis of N-acetylated amino acids to acetate and free amino acids.</text>
</comment>
<comment type="catalytic activity">
    <reaction evidence="3">
        <text>an N-acyl-L-amino acid + H2O = an L-alpha-amino acid + a carboxylate</text>
        <dbReference type="Rhea" id="RHEA:15565"/>
        <dbReference type="ChEBI" id="CHEBI:15377"/>
        <dbReference type="ChEBI" id="CHEBI:29067"/>
        <dbReference type="ChEBI" id="CHEBI:59869"/>
        <dbReference type="ChEBI" id="CHEBI:59874"/>
        <dbReference type="EC" id="3.5.1.14"/>
    </reaction>
    <physiologicalReaction direction="left-to-right" evidence="10">
        <dbReference type="Rhea" id="RHEA:15566"/>
    </physiologicalReaction>
</comment>
<comment type="catalytic activity">
    <reaction evidence="3">
        <text>N-acetyl-L-methionine + H2O = L-methionine + acetate</text>
        <dbReference type="Rhea" id="RHEA:67440"/>
        <dbReference type="ChEBI" id="CHEBI:15377"/>
        <dbReference type="ChEBI" id="CHEBI:30089"/>
        <dbReference type="ChEBI" id="CHEBI:57844"/>
        <dbReference type="ChEBI" id="CHEBI:71670"/>
    </reaction>
    <physiologicalReaction direction="left-to-right" evidence="10">
        <dbReference type="Rhea" id="RHEA:67441"/>
    </physiologicalReaction>
</comment>
<comment type="catalytic activity">
    <reaction evidence="2">
        <text>N-acetyl-L-glutamine + H2O = L-glutamine + acetate</text>
        <dbReference type="Rhea" id="RHEA:67368"/>
        <dbReference type="ChEBI" id="CHEBI:15377"/>
        <dbReference type="ChEBI" id="CHEBI:30089"/>
        <dbReference type="ChEBI" id="CHEBI:58359"/>
        <dbReference type="ChEBI" id="CHEBI:143879"/>
    </reaction>
    <physiologicalReaction direction="left-to-right" evidence="2">
        <dbReference type="Rhea" id="RHEA:67369"/>
    </physiologicalReaction>
</comment>
<comment type="cofactor">
    <cofactor evidence="3">
        <name>Zn(2+)</name>
        <dbReference type="ChEBI" id="CHEBI:29105"/>
    </cofactor>
    <text evidence="3">Binds 2 Zn(2+) ions per subunit.</text>
</comment>
<comment type="subunit">
    <text evidence="1">Homodimer. Interacts with SPHK1 (By similarity).</text>
</comment>
<comment type="interaction">
    <interactant intactId="EBI-742064">
        <id>Q03154</id>
    </interactant>
    <interactant intactId="EBI-742064">
        <id>Q03154</id>
        <label>ACY1</label>
    </interactant>
    <organismsDiffer>false</organismsDiffer>
    <experiments>7</experiments>
</comment>
<comment type="interaction">
    <interactant intactId="EBI-742064">
        <id>Q03154</id>
    </interactant>
    <interactant intactId="EBI-1050106">
        <id>O75934</id>
        <label>BCAS2</label>
    </interactant>
    <organismsDiffer>false</organismsDiffer>
    <experiments>3</experiments>
</comment>
<comment type="interaction">
    <interactant intactId="EBI-742064">
        <id>Q03154</id>
    </interactant>
    <interactant intactId="EBI-741158">
        <id>Q96HA8</id>
        <label>NTAQ1</label>
    </interactant>
    <organismsDiffer>false</organismsDiffer>
    <experiments>3</experiments>
</comment>
<comment type="interaction">
    <interactant intactId="EBI-742064">
        <id>Q03154</id>
    </interactant>
    <interactant intactId="EBI-1048967">
        <id>P36639</id>
        <label>NUDT1</label>
    </interactant>
    <organismsDiffer>false</organismsDiffer>
    <experiments>3</experiments>
</comment>
<comment type="interaction">
    <interactant intactId="EBI-742064">
        <id>Q03154</id>
    </interactant>
    <interactant intactId="EBI-12380931">
        <id>P36639-2</id>
        <label>NUDT1</label>
    </interactant>
    <organismsDiffer>false</organismsDiffer>
    <experiments>4</experiments>
</comment>
<comment type="interaction">
    <interactant intactId="EBI-742064">
        <id>Q03154</id>
    </interactant>
    <interactant intactId="EBI-14017370">
        <id>Q8TCT1</id>
        <label>PHOSPHO1</label>
    </interactant>
    <organismsDiffer>false</organismsDiffer>
    <experiments>2</experiments>
</comment>
<comment type="interaction">
    <interactant intactId="EBI-742064">
        <id>Q03154</id>
    </interactant>
    <interactant intactId="EBI-11986293">
        <id>P0CG20</id>
        <label>PRR35</label>
    </interactant>
    <organismsDiffer>false</organismsDiffer>
    <experiments>3</experiments>
</comment>
<comment type="interaction">
    <interactant intactId="EBI-742064">
        <id>Q03154</id>
    </interactant>
    <interactant intactId="EBI-752030">
        <id>Q96A09</id>
        <label>TENT5B</label>
    </interactant>
    <organismsDiffer>false</organismsDiffer>
    <experiments>3</experiments>
</comment>
<comment type="interaction">
    <interactant intactId="EBI-742064">
        <id>Q03154</id>
    </interactant>
    <interactant intactId="EBI-710997">
        <id>P54274</id>
        <label>TERF1</label>
    </interactant>
    <organismsDiffer>false</organismsDiffer>
    <experiments>2</experiments>
</comment>
<comment type="interaction">
    <interactant intactId="EBI-742064">
        <id>Q03154</id>
    </interactant>
    <interactant intactId="EBI-3939165">
        <id>O43711</id>
        <label>TLX3</label>
    </interactant>
    <organismsDiffer>false</organismsDiffer>
    <experiments>3</experiments>
</comment>
<comment type="interaction">
    <interactant intactId="EBI-742064">
        <id>Q03154</id>
    </interactant>
    <interactant intactId="EBI-2214398">
        <id>Q9UPN9</id>
        <label>TRIM33</label>
    </interactant>
    <organismsDiffer>false</organismsDiffer>
    <experiments>2</experiments>
</comment>
<comment type="interaction">
    <interactant intactId="EBI-742064">
        <id>Q03154</id>
    </interactant>
    <interactant intactId="EBI-12040603">
        <id>Q9NZC7-5</id>
        <label>WWOX</label>
    </interactant>
    <organismsDiffer>false</organismsDiffer>
    <experiments>3</experiments>
</comment>
<comment type="subcellular location">
    <subcellularLocation>
        <location>Cytoplasm</location>
    </subcellularLocation>
</comment>
<comment type="alternative products">
    <event type="alternative splicing"/>
    <isoform>
        <id>Q03154-1</id>
        <name>1</name>
        <sequence type="displayed"/>
    </isoform>
    <isoform>
        <id>Q03154-2</id>
        <name>2</name>
        <sequence type="described" ref="VSP_046877"/>
    </isoform>
    <isoform>
        <id>Q03154-3</id>
        <name>3</name>
        <sequence type="described" ref="VSP_046878"/>
    </isoform>
    <isoform>
        <id>Q03154-4</id>
        <name>4</name>
        <sequence type="described" ref="VSP_046876"/>
    </isoform>
</comment>
<comment type="tissue specificity">
    <text evidence="5">Expression is highest in kidney, strong in brain and weaker in placenta and spleen.</text>
</comment>
<comment type="disease" evidence="4 5 7 8">
    <disease id="DI-00095">
        <name>Aminoacylase-1 deficiency</name>
        <acronym>ACY1D</acronym>
        <description>An enzymatic deficiency resulting in encephalopathy, unspecific psychomotor delay, psychomotor delay with atrophy of the vermis and syringomyelia, marked muscular hypotonia or normal clinical features. Epileptic seizures are a frequent feature. All affected individuals exhibit markedly increased urinary excretion of several N-acetylated amino acids.</description>
        <dbReference type="MIM" id="609924"/>
    </disease>
    <text>The disease is caused by variants affecting the gene represented in this entry.</text>
</comment>
<comment type="similarity">
    <text evidence="9">Belongs to the peptidase M20A family.</text>
</comment>
<reference key="1">
    <citation type="journal article" date="1993" name="Biochim. Biophys. Acta">
        <title>The nucleotide sequence of human aminoacylase-1.</title>
        <authorList>
            <person name="Mitta M."/>
            <person name="Kato I."/>
            <person name="Tsunasawa S."/>
        </authorList>
    </citation>
    <scope>NUCLEOTIDE SEQUENCE [MRNA] (ISOFORM 1)</scope>
</reference>
<reference key="2">
    <citation type="journal article" date="1993" name="J. Biol. Chem.">
        <title>Human aminoacylase-1. Cloning, sequence, and expression analysis of a chromosome 3p21 gene inactivated in small cell lung cancer.</title>
        <authorList>
            <person name="Cook R.M."/>
            <person name="Burke B.J."/>
            <person name="Buchhagen D.L."/>
            <person name="Minna J.D."/>
            <person name="Miller Y.E."/>
        </authorList>
    </citation>
    <scope>NUCLEOTIDE SEQUENCE [MRNA] (ISOFORM 1)</scope>
    <source>
        <tissue>Liver</tissue>
    </source>
</reference>
<reference key="3">
    <citation type="submission" date="1993-06" db="EMBL/GenBank/DDBJ databases">
        <authorList>
            <person name="Iwaki K."/>
            <person name="Tanaka Y."/>
            <person name="Ohta T."/>
            <person name="Fukuda S."/>
            <person name="Kurimoto M."/>
        </authorList>
    </citation>
    <scope>NUCLEOTIDE SEQUENCE [MRNA] (ISOFORM 1)</scope>
</reference>
<reference key="4">
    <citation type="journal article" date="2006" name="Nature">
        <title>The DNA sequence, annotation and analysis of human chromosome 3.</title>
        <authorList>
            <person name="Muzny D.M."/>
            <person name="Scherer S.E."/>
            <person name="Kaul R."/>
            <person name="Wang J."/>
            <person name="Yu J."/>
            <person name="Sudbrak R."/>
            <person name="Buhay C.J."/>
            <person name="Chen R."/>
            <person name="Cree A."/>
            <person name="Ding Y."/>
            <person name="Dugan-Rocha S."/>
            <person name="Gill R."/>
            <person name="Gunaratne P."/>
            <person name="Harris R.A."/>
            <person name="Hawes A.C."/>
            <person name="Hernandez J."/>
            <person name="Hodgson A.V."/>
            <person name="Hume J."/>
            <person name="Jackson A."/>
            <person name="Khan Z.M."/>
            <person name="Kovar-Smith C."/>
            <person name="Lewis L.R."/>
            <person name="Lozado R.J."/>
            <person name="Metzker M.L."/>
            <person name="Milosavljevic A."/>
            <person name="Miner G.R."/>
            <person name="Morgan M.B."/>
            <person name="Nazareth L.V."/>
            <person name="Scott G."/>
            <person name="Sodergren E."/>
            <person name="Song X.-Z."/>
            <person name="Steffen D."/>
            <person name="Wei S."/>
            <person name="Wheeler D.A."/>
            <person name="Wright M.W."/>
            <person name="Worley K.C."/>
            <person name="Yuan Y."/>
            <person name="Zhang Z."/>
            <person name="Adams C.Q."/>
            <person name="Ansari-Lari M.A."/>
            <person name="Ayele M."/>
            <person name="Brown M.J."/>
            <person name="Chen G."/>
            <person name="Chen Z."/>
            <person name="Clendenning J."/>
            <person name="Clerc-Blankenburg K.P."/>
            <person name="Chen R."/>
            <person name="Chen Z."/>
            <person name="Davis C."/>
            <person name="Delgado O."/>
            <person name="Dinh H.H."/>
            <person name="Dong W."/>
            <person name="Draper H."/>
            <person name="Ernst S."/>
            <person name="Fu G."/>
            <person name="Gonzalez-Garay M.L."/>
            <person name="Garcia D.K."/>
            <person name="Gillett W."/>
            <person name="Gu J."/>
            <person name="Hao B."/>
            <person name="Haugen E."/>
            <person name="Havlak P."/>
            <person name="He X."/>
            <person name="Hennig S."/>
            <person name="Hu S."/>
            <person name="Huang W."/>
            <person name="Jackson L.R."/>
            <person name="Jacob L.S."/>
            <person name="Kelly S.H."/>
            <person name="Kube M."/>
            <person name="Levy R."/>
            <person name="Li Z."/>
            <person name="Liu B."/>
            <person name="Liu J."/>
            <person name="Liu W."/>
            <person name="Lu J."/>
            <person name="Maheshwari M."/>
            <person name="Nguyen B.-V."/>
            <person name="Okwuonu G.O."/>
            <person name="Palmeiri A."/>
            <person name="Pasternak S."/>
            <person name="Perez L.M."/>
            <person name="Phelps K.A."/>
            <person name="Plopper F.J."/>
            <person name="Qiang B."/>
            <person name="Raymond C."/>
            <person name="Rodriguez R."/>
            <person name="Saenphimmachak C."/>
            <person name="Santibanez J."/>
            <person name="Shen H."/>
            <person name="Shen Y."/>
            <person name="Subramanian S."/>
            <person name="Tabor P.E."/>
            <person name="Verduzco D."/>
            <person name="Waldron L."/>
            <person name="Wang J."/>
            <person name="Wang J."/>
            <person name="Wang Q."/>
            <person name="Williams G.A."/>
            <person name="Wong G.K.-S."/>
            <person name="Yao Z."/>
            <person name="Zhang J."/>
            <person name="Zhang X."/>
            <person name="Zhao G."/>
            <person name="Zhou J."/>
            <person name="Zhou Y."/>
            <person name="Nelson D."/>
            <person name="Lehrach H."/>
            <person name="Reinhardt R."/>
            <person name="Naylor S.L."/>
            <person name="Yang H."/>
            <person name="Olson M."/>
            <person name="Weinstock G."/>
            <person name="Gibbs R.A."/>
        </authorList>
    </citation>
    <scope>NUCLEOTIDE SEQUENCE [LARGE SCALE GENOMIC DNA]</scope>
</reference>
<reference key="5">
    <citation type="journal article" date="2004" name="Genome Res.">
        <title>The status, quality, and expansion of the NIH full-length cDNA project: the Mammalian Gene Collection (MGC).</title>
        <authorList>
            <consortium name="The MGC Project Team"/>
        </authorList>
    </citation>
    <scope>NUCLEOTIDE SEQUENCE [LARGE SCALE MRNA] (ISOFORM 1)</scope>
    <source>
        <tissue>Brain</tissue>
        <tissue>Lung</tissue>
        <tissue>Skin</tissue>
    </source>
</reference>
<reference key="6">
    <citation type="journal article" date="2003" name="J. Biol. Chem.">
        <title>Essential roles of zinc ligation and enzyme dimerization for catalysis in the aminoacylase-1/M20 family.</title>
        <authorList>
            <person name="Lindner H.A."/>
            <person name="Lunin V.V."/>
            <person name="Alary A."/>
            <person name="Hecker R."/>
            <person name="Cygler M."/>
            <person name="Menard R."/>
        </authorList>
    </citation>
    <scope>X-RAY CRYSTALLOGRAPHY (1.4 ANGSTROMS) IN COMPLEX WITH ZINC IONS</scope>
    <scope>FUNCTION</scope>
    <scope>CATALYTIC ACTIVITY</scope>
    <scope>COFACTOR</scope>
    <scope>SUBUNIT</scope>
    <scope>ACTIVE SITE</scope>
    <scope>MUTAGENESIS OF HIS-80; ASP-113; GLU-147; GLU-148; GLU-175; HIS-206 AND HIS-373</scope>
</reference>
<reference key="7">
    <citation type="journal article" date="2005" name="Biochem. Biophys. Res. Commun.">
        <title>Aminoacylase I deficiency: a novel inborn error of metabolism.</title>
        <authorList>
            <person name="Van Coster R.N."/>
            <person name="Gerlo E.A."/>
            <person name="Giardina T.G."/>
            <person name="Engelke U.F."/>
            <person name="Smet J.E."/>
            <person name="De Praeter C.M."/>
            <person name="Meersschaut V.A."/>
            <person name="De Meirleir L.J."/>
            <person name="Seneca S.H."/>
            <person name="Devreese B."/>
            <person name="Leroy J.G."/>
            <person name="Herga S."/>
            <person name="Perrier J.P."/>
            <person name="Wevers R.A."/>
            <person name="Lissens W."/>
        </authorList>
    </citation>
    <scope>VARIANT ACY1D CYS-353</scope>
</reference>
<reference key="8">
    <citation type="journal article" date="2006" name="Am. J. Hum. Genet.">
        <title>Mutations in ACY1, the gene encoding aminoacylase 1, cause a novel inborn error of metabolism.</title>
        <authorList>
            <person name="Sass J.O."/>
            <person name="Mohr V."/>
            <person name="Olbrich H."/>
            <person name="Engelke U."/>
            <person name="Horvath J."/>
            <person name="Fliegauf M."/>
            <person name="Loges N.T."/>
            <person name="Schweitzer-Krantz S."/>
            <person name="Moebus R."/>
            <person name="Weiler P."/>
            <person name="Kispert A."/>
            <person name="Superti-Furga A."/>
            <person name="Wevers R.A."/>
            <person name="Omran H."/>
        </authorList>
    </citation>
    <scope>VARIANTS ACY1D ASP-233 AND CYS-353</scope>
    <scope>TISSUE SPECIFICITY</scope>
</reference>
<reference key="9">
    <citation type="journal article" date="2006" name="Science">
        <title>The consensus coding sequences of human breast and colorectal cancers.</title>
        <authorList>
            <person name="Sjoeblom T."/>
            <person name="Jones S."/>
            <person name="Wood L.D."/>
            <person name="Parsons D.W."/>
            <person name="Lin J."/>
            <person name="Barber T.D."/>
            <person name="Mandelker D."/>
            <person name="Leary R.J."/>
            <person name="Ptak J."/>
            <person name="Silliman N."/>
            <person name="Szabo S."/>
            <person name="Buckhaults P."/>
            <person name="Farrell C."/>
            <person name="Meeh P."/>
            <person name="Markowitz S.D."/>
            <person name="Willis J."/>
            <person name="Dawson D."/>
            <person name="Willson J.K.V."/>
            <person name="Gazdar A.F."/>
            <person name="Hartigan J."/>
            <person name="Wu L."/>
            <person name="Liu C."/>
            <person name="Parmigiani G."/>
            <person name="Park B.H."/>
            <person name="Bachman K.E."/>
            <person name="Papadopoulos N."/>
            <person name="Vogelstein B."/>
            <person name="Kinzler K.W."/>
            <person name="Velculescu V.E."/>
        </authorList>
    </citation>
    <scope>VARIANT [LARGE SCALE ANALYSIS] ASP-381</scope>
</reference>
<reference key="10">
    <citation type="journal article" date="2007" name="Neurology">
        <title>Neurological findings in aminoacylase 1 deficiency.</title>
        <authorList>
            <person name="Sass J.O."/>
            <person name="Olbrich H."/>
            <person name="Mohr V."/>
            <person name="Hart C."/>
            <person name="Woldseth B."/>
            <person name="Krywawych S."/>
            <person name="Bjurulf B."/>
            <person name="Lakhani P.K."/>
            <person name="Buchdahl R.M."/>
            <person name="Omran H."/>
        </authorList>
    </citation>
    <scope>VARIANTS ACY1D TRP-197; CYS-353 AND HIS-393</scope>
</reference>
<reference key="11">
    <citation type="journal article" date="2011" name="Biochim. Biophys. Acta">
        <title>The molecular basis of aminoacylase 1 deficiency.</title>
        <authorList>
            <person name="Sommer A."/>
            <person name="Christensen E."/>
            <person name="Schwenger S."/>
            <person name="Seul R."/>
            <person name="Haas D."/>
            <person name="Olbrich H."/>
            <person name="Omran H."/>
            <person name="Sass J.O."/>
        </authorList>
    </citation>
    <scope>VARIANTS ACY1D GLN-378; TRP-378 AND CYS-386</scope>
    <scope>CHARACTERIZATION OF VARIANTS ACY1D TRP-197; ASP-233; CYS-353; TRP-378 AND CYS-386</scope>
</reference>
<protein>
    <recommendedName>
        <fullName>Aminoacylase-1</fullName>
        <shortName>ACY-1</shortName>
        <ecNumber evidence="3">3.5.1.14</ecNumber>
    </recommendedName>
    <alternativeName>
        <fullName>N-acyl-L-amino-acid amidohydrolase</fullName>
    </alternativeName>
</protein>
<proteinExistence type="evidence at protein level"/>
<keyword id="KW-0002">3D-structure</keyword>
<keyword id="KW-0025">Alternative splicing</keyword>
<keyword id="KW-0963">Cytoplasm</keyword>
<keyword id="KW-0225">Disease variant</keyword>
<keyword id="KW-0378">Hydrolase</keyword>
<keyword id="KW-0479">Metal-binding</keyword>
<keyword id="KW-1267">Proteomics identification</keyword>
<keyword id="KW-1185">Reference proteome</keyword>
<keyword id="KW-0862">Zinc</keyword>
<organism>
    <name type="scientific">Homo sapiens</name>
    <name type="common">Human</name>
    <dbReference type="NCBI Taxonomy" id="9606"/>
    <lineage>
        <taxon>Eukaryota</taxon>
        <taxon>Metazoa</taxon>
        <taxon>Chordata</taxon>
        <taxon>Craniata</taxon>
        <taxon>Vertebrata</taxon>
        <taxon>Euteleostomi</taxon>
        <taxon>Mammalia</taxon>
        <taxon>Eutheria</taxon>
        <taxon>Euarchontoglires</taxon>
        <taxon>Primates</taxon>
        <taxon>Haplorrhini</taxon>
        <taxon>Catarrhini</taxon>
        <taxon>Hominidae</taxon>
        <taxon>Homo</taxon>
    </lineage>
</organism>
<name>ACY1_HUMAN</name>
<evidence type="ECO:0000250" key="1"/>
<evidence type="ECO:0000250" key="2">
    <source>
        <dbReference type="UniProtKB" id="Q99JW2"/>
    </source>
</evidence>
<evidence type="ECO:0000269" key="3">
    <source>
    </source>
</evidence>
<evidence type="ECO:0000269" key="4">
    <source>
    </source>
</evidence>
<evidence type="ECO:0000269" key="5">
    <source>
    </source>
</evidence>
<evidence type="ECO:0000269" key="6">
    <source>
    </source>
</evidence>
<evidence type="ECO:0000269" key="7">
    <source>
    </source>
</evidence>
<evidence type="ECO:0000269" key="8">
    <source>
    </source>
</evidence>
<evidence type="ECO:0000305" key="9"/>
<evidence type="ECO:0000305" key="10">
    <source>
    </source>
</evidence>
<evidence type="ECO:0007829" key="11">
    <source>
        <dbReference type="PDB" id="1Q7L"/>
    </source>
</evidence>
<dbReference type="EC" id="3.5.1.14" evidence="3"/>
<dbReference type="EMBL" id="L07548">
    <property type="protein sequence ID" value="AAA02852.1"/>
    <property type="molecule type" value="mRNA"/>
</dbReference>
<dbReference type="EMBL" id="D14524">
    <property type="protein sequence ID" value="BAA03397.1"/>
    <property type="molecule type" value="mRNA"/>
</dbReference>
<dbReference type="EMBL" id="D16307">
    <property type="protein sequence ID" value="BAA03814.1"/>
    <property type="molecule type" value="mRNA"/>
</dbReference>
<dbReference type="EMBL" id="AC115284">
    <property type="status" value="NOT_ANNOTATED_CDS"/>
    <property type="molecule type" value="Genomic_DNA"/>
</dbReference>
<dbReference type="EMBL" id="BC000545">
    <property type="protein sequence ID" value="AAH00545.1"/>
    <property type="molecule type" value="mRNA"/>
</dbReference>
<dbReference type="EMBL" id="BC003023">
    <property type="protein sequence ID" value="AAH03023.1"/>
    <property type="molecule type" value="mRNA"/>
</dbReference>
<dbReference type="EMBL" id="BC014112">
    <property type="protein sequence ID" value="AAH14112.1"/>
    <property type="molecule type" value="mRNA"/>
</dbReference>
<dbReference type="CCDS" id="CCDS2844.1">
    <molecule id="Q03154-1"/>
</dbReference>
<dbReference type="CCDS" id="CCDS56261.1">
    <molecule id="Q03154-2"/>
</dbReference>
<dbReference type="CCDS" id="CCDS56262.1">
    <molecule id="Q03154-3"/>
</dbReference>
<dbReference type="CCDS" id="CCDS56263.1">
    <molecule id="Q03154-4"/>
</dbReference>
<dbReference type="PIR" id="A47488">
    <property type="entry name" value="A47488"/>
</dbReference>
<dbReference type="RefSeq" id="NP_000657.1">
    <molecule id="Q03154-1"/>
    <property type="nucleotide sequence ID" value="NM_000666.3"/>
</dbReference>
<dbReference type="RefSeq" id="NP_001185824.1">
    <molecule id="Q03154-1"/>
    <property type="nucleotide sequence ID" value="NM_001198895.2"/>
</dbReference>
<dbReference type="RefSeq" id="NP_001185825.1">
    <molecule id="Q03154-2"/>
    <property type="nucleotide sequence ID" value="NM_001198896.2"/>
</dbReference>
<dbReference type="RefSeq" id="NP_001185826.1">
    <molecule id="Q03154-3"/>
    <property type="nucleotide sequence ID" value="NM_001198897.2"/>
</dbReference>
<dbReference type="RefSeq" id="NP_001185827.1">
    <molecule id="Q03154-4"/>
    <property type="nucleotide sequence ID" value="NM_001198898.2"/>
</dbReference>
<dbReference type="PDB" id="1Q7L">
    <property type="method" value="X-ray"/>
    <property type="resolution" value="1.40 A"/>
    <property type="chains" value="A/C=1-198, B/D=321-408"/>
</dbReference>
<dbReference type="PDBsum" id="1Q7L"/>
<dbReference type="SMR" id="Q03154"/>
<dbReference type="BioGRID" id="106610">
    <property type="interactions" value="69"/>
</dbReference>
<dbReference type="FunCoup" id="Q03154">
    <property type="interactions" value="338"/>
</dbReference>
<dbReference type="IntAct" id="Q03154">
    <property type="interactions" value="32"/>
</dbReference>
<dbReference type="MINT" id="Q03154"/>
<dbReference type="STRING" id="9606.ENSP00000384296"/>
<dbReference type="DrugBank" id="DB06151">
    <property type="generic name" value="Acetylcysteine"/>
</dbReference>
<dbReference type="DrugBank" id="DB00128">
    <property type="generic name" value="Aspartic acid"/>
</dbReference>
<dbReference type="DrugBank" id="DB09130">
    <property type="generic name" value="Copper"/>
</dbReference>
<dbReference type="DrugCentral" id="Q03154"/>
<dbReference type="MEROPS" id="M20.973"/>
<dbReference type="GlyGen" id="Q03154">
    <property type="glycosylation" value="1 site, 1 O-linked glycan (1 site)"/>
</dbReference>
<dbReference type="iPTMnet" id="Q03154"/>
<dbReference type="PhosphoSitePlus" id="Q03154"/>
<dbReference type="BioMuta" id="ACY1"/>
<dbReference type="DMDM" id="461466"/>
<dbReference type="REPRODUCTION-2DPAGE" id="IPI00009268"/>
<dbReference type="jPOST" id="Q03154"/>
<dbReference type="MassIVE" id="Q03154"/>
<dbReference type="PaxDb" id="9606-ENSP00000384296"/>
<dbReference type="PeptideAtlas" id="Q03154"/>
<dbReference type="ProteomicsDB" id="11969"/>
<dbReference type="ProteomicsDB" id="58194">
    <molecule id="Q03154-1"/>
</dbReference>
<dbReference type="ProteomicsDB" id="8777"/>
<dbReference type="ProteomicsDB" id="9178"/>
<dbReference type="Pumba" id="Q03154"/>
<dbReference type="Antibodypedia" id="34911">
    <property type="antibodies" value="524 antibodies from 34 providers"/>
</dbReference>
<dbReference type="DNASU" id="95"/>
<dbReference type="Ensembl" id="ENST00000404366.7">
    <molecule id="Q03154-1"/>
    <property type="protein sequence ID" value="ENSP00000384296.2"/>
    <property type="gene ID" value="ENSG00000243989.9"/>
</dbReference>
<dbReference type="Ensembl" id="ENST00000476351.5">
    <molecule id="Q03154-4"/>
    <property type="protein sequence ID" value="ENSP00000417056.1"/>
    <property type="gene ID" value="ENSG00000243989.9"/>
</dbReference>
<dbReference type="Ensembl" id="ENST00000476854.5">
    <molecule id="Q03154-3"/>
    <property type="protein sequence ID" value="ENSP00000419262.1"/>
    <property type="gene ID" value="ENSG00000243989.9"/>
</dbReference>
<dbReference type="Ensembl" id="ENST00000494103.5">
    <molecule id="Q03154-2"/>
    <property type="protein sequence ID" value="ENSP00000417618.1"/>
    <property type="gene ID" value="ENSG00000243989.9"/>
</dbReference>
<dbReference type="Ensembl" id="ENST00000636358.2">
    <molecule id="Q03154-1"/>
    <property type="protein sequence ID" value="ENSP00000490149.1"/>
    <property type="gene ID" value="ENSG00000243989.9"/>
</dbReference>
<dbReference type="GeneID" id="95"/>
<dbReference type="KEGG" id="hsa:95"/>
<dbReference type="MANE-Select" id="ENST00000636358.2">
    <property type="protein sequence ID" value="ENSP00000490149.1"/>
    <property type="RefSeq nucleotide sequence ID" value="NM_000666.3"/>
    <property type="RefSeq protein sequence ID" value="NP_000657.1"/>
</dbReference>
<dbReference type="UCSC" id="uc021wzb.2">
    <molecule id="Q03154-1"/>
    <property type="organism name" value="human"/>
</dbReference>
<dbReference type="AGR" id="HGNC:177"/>
<dbReference type="CTD" id="95"/>
<dbReference type="DisGeNET" id="95"/>
<dbReference type="GeneCards" id="ACY1"/>
<dbReference type="HGNC" id="HGNC:177">
    <property type="gene designation" value="ACY1"/>
</dbReference>
<dbReference type="HPA" id="ENSG00000243989">
    <property type="expression patterns" value="Group enriched (intestine, kidney, liver)"/>
</dbReference>
<dbReference type="MalaCards" id="ACY1"/>
<dbReference type="MIM" id="104620">
    <property type="type" value="gene"/>
</dbReference>
<dbReference type="MIM" id="609924">
    <property type="type" value="phenotype"/>
</dbReference>
<dbReference type="neXtProt" id="NX_Q03154"/>
<dbReference type="OpenTargets" id="ENSG00000243989"/>
<dbReference type="Orphanet" id="137754">
    <property type="disease" value="Aminoacylase 1 deficiency"/>
</dbReference>
<dbReference type="PharmGKB" id="PA24497"/>
<dbReference type="VEuPathDB" id="HostDB:ENSG00000243989"/>
<dbReference type="eggNOG" id="KOG2275">
    <property type="taxonomic scope" value="Eukaryota"/>
</dbReference>
<dbReference type="GeneTree" id="ENSGT00940000155631"/>
<dbReference type="HOGENOM" id="CLU_021802_5_0_1"/>
<dbReference type="InParanoid" id="Q03154"/>
<dbReference type="OMA" id="FYGERAQ"/>
<dbReference type="OrthoDB" id="3064516at2759"/>
<dbReference type="PAN-GO" id="Q03154">
    <property type="GO annotations" value="1 GO annotation based on evolutionary models"/>
</dbReference>
<dbReference type="PhylomeDB" id="Q03154"/>
<dbReference type="TreeFam" id="TF313693"/>
<dbReference type="BioCyc" id="MetaCyc:HS03800-MONOMER"/>
<dbReference type="BRENDA" id="3.5.1.14">
    <property type="organism ID" value="2681"/>
</dbReference>
<dbReference type="PathwayCommons" id="Q03154"/>
<dbReference type="Reactome" id="R-HSA-5423646">
    <property type="pathway name" value="Aflatoxin activation and detoxification"/>
</dbReference>
<dbReference type="Reactome" id="R-HSA-5579007">
    <property type="pathway name" value="Defective ACY1 causes encephalopathy"/>
</dbReference>
<dbReference type="Reactome" id="R-HSA-9753281">
    <property type="pathway name" value="Paracetamol ADME"/>
</dbReference>
<dbReference type="SABIO-RK" id="Q03154"/>
<dbReference type="SignaLink" id="Q03154"/>
<dbReference type="BioGRID-ORCS" id="95">
    <property type="hits" value="12 hits in 1161 CRISPR screens"/>
</dbReference>
<dbReference type="EvolutionaryTrace" id="Q03154"/>
<dbReference type="GeneWiki" id="ACY1"/>
<dbReference type="GenomeRNAi" id="95"/>
<dbReference type="Pharos" id="Q03154">
    <property type="development level" value="Tbio"/>
</dbReference>
<dbReference type="PRO" id="PR:Q03154"/>
<dbReference type="Proteomes" id="UP000005640">
    <property type="component" value="Chromosome 3"/>
</dbReference>
<dbReference type="RNAct" id="Q03154">
    <property type="molecule type" value="protein"/>
</dbReference>
<dbReference type="Bgee" id="ENSG00000243989">
    <property type="expression patterns" value="Expressed in duodenum and 97 other cell types or tissues"/>
</dbReference>
<dbReference type="ExpressionAtlas" id="Q03154">
    <property type="expression patterns" value="baseline and differential"/>
</dbReference>
<dbReference type="GO" id="GO:0005829">
    <property type="term" value="C:cytosol"/>
    <property type="evidence" value="ECO:0000304"/>
    <property type="project" value="Reactome"/>
</dbReference>
<dbReference type="GO" id="GO:0070062">
    <property type="term" value="C:extracellular exosome"/>
    <property type="evidence" value="ECO:0000314"/>
    <property type="project" value="UniProtKB"/>
</dbReference>
<dbReference type="GO" id="GO:0004046">
    <property type="term" value="F:aminoacylase activity"/>
    <property type="evidence" value="ECO:0000314"/>
    <property type="project" value="UniProtKB"/>
</dbReference>
<dbReference type="GO" id="GO:0042802">
    <property type="term" value="F:identical protein binding"/>
    <property type="evidence" value="ECO:0000353"/>
    <property type="project" value="IntAct"/>
</dbReference>
<dbReference type="GO" id="GO:0046872">
    <property type="term" value="F:metal ion binding"/>
    <property type="evidence" value="ECO:0007669"/>
    <property type="project" value="UniProtKB-KW"/>
</dbReference>
<dbReference type="GO" id="GO:0006520">
    <property type="term" value="P:amino acid metabolic process"/>
    <property type="evidence" value="ECO:0007669"/>
    <property type="project" value="InterPro"/>
</dbReference>
<dbReference type="CDD" id="cd05646">
    <property type="entry name" value="M20_AcylaseI_like"/>
    <property type="match status" value="1"/>
</dbReference>
<dbReference type="FunFam" id="3.40.630.10:FF:000019">
    <property type="entry name" value="Aminoacylase 1"/>
    <property type="match status" value="1"/>
</dbReference>
<dbReference type="FunFam" id="1.10.150.900:FF:000001">
    <property type="entry name" value="Aminoacylase-1, putative"/>
    <property type="match status" value="1"/>
</dbReference>
<dbReference type="FunFam" id="3.30.70.360:FF:000005">
    <property type="entry name" value="Putative Aminoacylase-1"/>
    <property type="match status" value="1"/>
</dbReference>
<dbReference type="Gene3D" id="1.10.150.900">
    <property type="match status" value="1"/>
</dbReference>
<dbReference type="Gene3D" id="3.30.70.360">
    <property type="match status" value="1"/>
</dbReference>
<dbReference type="Gene3D" id="3.40.630.10">
    <property type="entry name" value="Zn peptidases"/>
    <property type="match status" value="1"/>
</dbReference>
<dbReference type="InterPro" id="IPR052083">
    <property type="entry name" value="Aminoacylase-1_M20A"/>
</dbReference>
<dbReference type="InterPro" id="IPR001261">
    <property type="entry name" value="ArgE/DapE_CS"/>
</dbReference>
<dbReference type="InterPro" id="IPR036264">
    <property type="entry name" value="Bact_exopeptidase_dim_dom"/>
</dbReference>
<dbReference type="InterPro" id="IPR010159">
    <property type="entry name" value="N-acyl_aa_amidohydrolase"/>
</dbReference>
<dbReference type="InterPro" id="IPR002933">
    <property type="entry name" value="Peptidase_M20"/>
</dbReference>
<dbReference type="InterPro" id="IPR011650">
    <property type="entry name" value="Peptidase_M20_dimer"/>
</dbReference>
<dbReference type="NCBIfam" id="TIGR01880">
    <property type="entry name" value="Ac-peptdase-euk"/>
    <property type="match status" value="1"/>
</dbReference>
<dbReference type="PANTHER" id="PTHR45892">
    <property type="entry name" value="AMINOACYLASE-1"/>
    <property type="match status" value="1"/>
</dbReference>
<dbReference type="PANTHER" id="PTHR45892:SF1">
    <property type="entry name" value="AMINOACYLASE-1"/>
    <property type="match status" value="1"/>
</dbReference>
<dbReference type="Pfam" id="PF07687">
    <property type="entry name" value="M20_dimer"/>
    <property type="match status" value="1"/>
</dbReference>
<dbReference type="Pfam" id="PF01546">
    <property type="entry name" value="Peptidase_M20"/>
    <property type="match status" value="1"/>
</dbReference>
<dbReference type="PIRSF" id="PIRSF036696">
    <property type="entry name" value="ACY-1"/>
    <property type="match status" value="1"/>
</dbReference>
<dbReference type="SUPFAM" id="SSF55031">
    <property type="entry name" value="Bacterial exopeptidase dimerisation domain"/>
    <property type="match status" value="1"/>
</dbReference>
<dbReference type="SUPFAM" id="SSF53187">
    <property type="entry name" value="Zn-dependent exopeptidases"/>
    <property type="match status" value="1"/>
</dbReference>
<dbReference type="PROSITE" id="PS00758">
    <property type="entry name" value="ARGE_DAPE_CPG2_1"/>
    <property type="match status" value="1"/>
</dbReference>
<dbReference type="PROSITE" id="PS00759">
    <property type="entry name" value="ARGE_DAPE_CPG2_2"/>
    <property type="match status" value="1"/>
</dbReference>
<accession>Q03154</accession>
<accession>C9J6I6</accession>
<accession>C9J9D8</accession>
<accession>C9JWD4</accession>
<feature type="chain" id="PRO_0000185236" description="Aminoacylase-1">
    <location>
        <begin position="1"/>
        <end position="408"/>
    </location>
</feature>
<feature type="active site" evidence="1">
    <location>
        <position position="82"/>
    </location>
</feature>
<feature type="active site" description="Proton acceptor" evidence="3">
    <location>
        <position position="147"/>
    </location>
</feature>
<feature type="binding site" evidence="3">
    <location>
        <position position="80"/>
    </location>
    <ligand>
        <name>Zn(2+)</name>
        <dbReference type="ChEBI" id="CHEBI:29105"/>
        <label>1</label>
    </ligand>
</feature>
<feature type="binding site" evidence="3">
    <location>
        <position position="113"/>
    </location>
    <ligand>
        <name>Zn(2+)</name>
        <dbReference type="ChEBI" id="CHEBI:29105"/>
        <label>1</label>
    </ligand>
</feature>
<feature type="binding site" evidence="3">
    <location>
        <position position="113"/>
    </location>
    <ligand>
        <name>Zn(2+)</name>
        <dbReference type="ChEBI" id="CHEBI:29105"/>
        <label>2</label>
    </ligand>
</feature>
<feature type="binding site" evidence="3">
    <location>
        <position position="148"/>
    </location>
    <ligand>
        <name>Zn(2+)</name>
        <dbReference type="ChEBI" id="CHEBI:29105"/>
        <label>2</label>
    </ligand>
</feature>
<feature type="binding site" evidence="3">
    <location>
        <position position="175"/>
    </location>
    <ligand>
        <name>Zn(2+)</name>
        <dbReference type="ChEBI" id="CHEBI:29105"/>
        <label>1</label>
    </ligand>
</feature>
<feature type="binding site" evidence="3">
    <location>
        <position position="373"/>
    </location>
    <ligand>
        <name>Zn(2+)</name>
        <dbReference type="ChEBI" id="CHEBI:29105"/>
        <label>2</label>
    </ligand>
</feature>
<feature type="splice variant" id="VSP_046876" description="In isoform 4." evidence="9">
    <location>
        <begin position="32"/>
        <end position="66"/>
    </location>
</feature>
<feature type="splice variant" id="VSP_046877" description="In isoform 2." evidence="9">
    <location>
        <begin position="103"/>
        <end position="174"/>
    </location>
</feature>
<feature type="splice variant" id="VSP_046878" description="In isoform 3." evidence="9">
    <location>
        <begin position="220"/>
        <end position="284"/>
    </location>
</feature>
<feature type="sequence variant" id="VAR_051805" description="In dbSNP:rs887540.">
    <original>N</original>
    <variation>S</variation>
    <location>
        <position position="179"/>
    </location>
</feature>
<feature type="sequence variant" id="VAR_043113" description="In ACY1D; loss of activity; dbSNP:rs121912700." evidence="7 8">
    <original>R</original>
    <variation>W</variation>
    <location>
        <position position="197"/>
    </location>
</feature>
<feature type="sequence variant" id="VAR_026104" description="In ACY1D; loss of activity; dbSNP:rs121912699." evidence="5 8">
    <original>E</original>
    <variation>D</variation>
    <location>
        <position position="233"/>
    </location>
</feature>
<feature type="sequence variant" id="VAR_026105" description="In ACY1D; loss of activity; dbSNP:rs121912698." evidence="4 5 7 8">
    <original>R</original>
    <variation>C</variation>
    <location>
        <position position="353"/>
    </location>
</feature>
<feature type="sequence variant" id="VAR_065562" description="In ACY1D; dbSNP:rs150480963." evidence="8">
    <original>R</original>
    <variation>Q</variation>
    <location>
        <position position="378"/>
    </location>
</feature>
<feature type="sequence variant" id="VAR_065563" description="In ACY1D; slightly reduced activity; dbSNP:rs148346337." evidence="8">
    <original>R</original>
    <variation>W</variation>
    <location>
        <position position="378"/>
    </location>
</feature>
<feature type="sequence variant" id="VAR_036076" description="In a breast cancer sample; somatic mutation." evidence="6">
    <original>E</original>
    <variation>D</variation>
    <location>
        <position position="381"/>
    </location>
</feature>
<feature type="sequence variant" id="VAR_020452" description="In ACY1D; loss of activity; dbSNP:rs2229152." evidence="8">
    <original>R</original>
    <variation>C</variation>
    <location>
        <position position="386"/>
    </location>
</feature>
<feature type="sequence variant" id="VAR_043114" description="In ACY1D; dbSNP:rs121912701." evidence="7">
    <original>R</original>
    <variation>H</variation>
    <location>
        <position position="393"/>
    </location>
</feature>
<feature type="mutagenesis site" description="Almost abolishes enzyme activity." evidence="3">
    <original>H</original>
    <variation>A</variation>
    <location>
        <position position="80"/>
    </location>
</feature>
<feature type="mutagenesis site" description="Almost abolishes enzyme activity." evidence="3">
    <original>D</original>
    <variation>A</variation>
    <location>
        <position position="113"/>
    </location>
</feature>
<feature type="mutagenesis site" description="Almost abolishes enzyme activity." evidence="3">
    <original>E</original>
    <variation>A</variation>
    <variation>Q</variation>
    <location>
        <position position="147"/>
    </location>
</feature>
<feature type="mutagenesis site" description="Decreased protein stability. Loss of enzyme activity." evidence="3">
    <original>E</original>
    <variation>D</variation>
    <location>
        <position position="147"/>
    </location>
</feature>
<feature type="mutagenesis site" description="Almost abolishes enzyme activity." evidence="3">
    <original>E</original>
    <variation>A</variation>
    <location>
        <position position="148"/>
    </location>
</feature>
<feature type="mutagenesis site" description="Almost abolishes enzyme activity." evidence="3">
    <original>E</original>
    <variation>A</variation>
    <location>
        <position position="175"/>
    </location>
</feature>
<feature type="mutagenesis site" description="Almost abolishes enzyme activity." evidence="3">
    <original>H</original>
    <variation>N</variation>
    <location>
        <position position="206"/>
    </location>
</feature>
<feature type="mutagenesis site" description="Almost abolishes enzyme activity." evidence="3">
    <original>H</original>
    <variation>A</variation>
    <location>
        <position position="373"/>
    </location>
</feature>
<feature type="helix" evidence="11">
    <location>
        <begin position="11"/>
        <end position="20"/>
    </location>
</feature>
<feature type="helix" evidence="11">
    <location>
        <begin position="31"/>
        <end position="45"/>
    </location>
</feature>
<feature type="strand" evidence="11">
    <location>
        <begin position="48"/>
        <end position="55"/>
    </location>
</feature>
<feature type="strand" evidence="11">
    <location>
        <begin position="58"/>
        <end position="65"/>
    </location>
</feature>
<feature type="strand" evidence="11">
    <location>
        <begin position="74"/>
        <end position="80"/>
    </location>
</feature>
<feature type="helix" evidence="11">
    <location>
        <begin position="88"/>
        <end position="90"/>
    </location>
</feature>
<feature type="turn" evidence="11">
    <location>
        <begin position="95"/>
        <end position="97"/>
    </location>
</feature>
<feature type="strand" evidence="11">
    <location>
        <begin position="104"/>
        <end position="107"/>
    </location>
</feature>
<feature type="turn" evidence="11">
    <location>
        <begin position="109"/>
        <end position="114"/>
    </location>
</feature>
<feature type="helix" evidence="11">
    <location>
        <begin position="115"/>
        <end position="130"/>
    </location>
</feature>
<feature type="strand" evidence="11">
    <location>
        <begin position="139"/>
        <end position="145"/>
    </location>
</feature>
<feature type="helix" evidence="11">
    <location>
        <begin position="147"/>
        <end position="149"/>
    </location>
</feature>
<feature type="turn" evidence="11">
    <location>
        <begin position="152"/>
        <end position="154"/>
    </location>
</feature>
<feature type="helix" evidence="11">
    <location>
        <begin position="155"/>
        <end position="158"/>
    </location>
</feature>
<feature type="helix" evidence="11">
    <location>
        <begin position="162"/>
        <end position="165"/>
    </location>
</feature>
<feature type="strand" evidence="11">
    <location>
        <begin position="169"/>
        <end position="174"/>
    </location>
</feature>
<feature type="strand" evidence="11">
    <location>
        <begin position="180"/>
        <end position="188"/>
    </location>
</feature>
<feature type="helix" evidence="11">
    <location>
        <begin position="194"/>
        <end position="196"/>
    </location>
</feature>
<feature type="helix" evidence="11">
    <location>
        <begin position="322"/>
        <end position="333"/>
    </location>
</feature>
<feature type="strand" evidence="11">
    <location>
        <begin position="338"/>
        <end position="342"/>
    </location>
</feature>
<feature type="helix" evidence="11">
    <location>
        <begin position="348"/>
        <end position="354"/>
    </location>
</feature>
<feature type="strand" evidence="11">
    <location>
        <begin position="359"/>
        <end position="362"/>
    </location>
</feature>
<feature type="strand" evidence="11">
    <location>
        <begin position="378"/>
        <end position="380"/>
    </location>
</feature>
<feature type="helix" evidence="11">
    <location>
        <begin position="381"/>
        <end position="399"/>
    </location>
</feature>
<feature type="helix" evidence="11">
    <location>
        <begin position="405"/>
        <end position="407"/>
    </location>
</feature>
<gene>
    <name type="primary">ACY1</name>
</gene>
<sequence>MTSKGPEEEHPSVTLFRQYLRIRTVQPKPDYGAAVAFFEETARQLGLGCQKVEVAPGYVVTVLTWPGTNPTLSSILLNSHTDVVPVFKEHWSHDPFEAFKDSEGYIYARGAQDMKCVSIQYLEAVRRLKVEGHRFPRTIHMTFVPDEEVGGHQGMELFVQRPEFHALRAGFALDEGIANPTDAFTVFYSERSPWWVRVTSTGRPGHASRFMEDTAAEKLHKVVNSILAFREKEWQRLQSNPHLKEGSVTSVNLTKLEGGVAYNVIPATMSASFDFRVAPDVDFKAFEEQLQSWCQAAGEGVTLEFAQKWMHPQVTPTDDSNPWWAAFSRVCKDMNLTLEPEIMPAATDNRYIRAVGVPALGFSPMNRTPVLLHDHDERLHEAVFLRGVDIYTRLLPALASVPALPSDS</sequence>